<keyword id="KW-0004">4Fe-4S</keyword>
<keyword id="KW-0067">ATP-binding</keyword>
<keyword id="KW-0149">Chlorophyll biosynthesis</keyword>
<keyword id="KW-0150">Chloroplast</keyword>
<keyword id="KW-0408">Iron</keyword>
<keyword id="KW-0411">Iron-sulfur</keyword>
<keyword id="KW-0479">Metal-binding</keyword>
<keyword id="KW-0547">Nucleotide-binding</keyword>
<keyword id="KW-0560">Oxidoreductase</keyword>
<keyword id="KW-0602">Photosynthesis</keyword>
<keyword id="KW-0934">Plastid</keyword>
<organism>
    <name type="scientific">Zygnema circumcarinatum</name>
    <name type="common">Green alga</name>
    <dbReference type="NCBI Taxonomy" id="35869"/>
    <lineage>
        <taxon>Eukaryota</taxon>
        <taxon>Viridiplantae</taxon>
        <taxon>Streptophyta</taxon>
        <taxon>Zygnematophyceae</taxon>
        <taxon>Zygnematophycidae</taxon>
        <taxon>Zygnematales</taxon>
        <taxon>Zygnemataceae</taxon>
        <taxon>Zygnema</taxon>
    </lineage>
</organism>
<geneLocation type="chloroplast"/>
<feature type="chain" id="PRO_0000275275" description="Light-independent protochlorophyllide reductase subunit N">
    <location>
        <begin position="1"/>
        <end position="470"/>
    </location>
</feature>
<feature type="binding site" evidence="1">
    <location>
        <position position="23"/>
    </location>
    <ligand>
        <name>[4Fe-4S] cluster</name>
        <dbReference type="ChEBI" id="CHEBI:49883"/>
        <note>ligand shared with heterodimeric partner</note>
    </ligand>
</feature>
<feature type="binding site" evidence="1">
    <location>
        <position position="48"/>
    </location>
    <ligand>
        <name>[4Fe-4S] cluster</name>
        <dbReference type="ChEBI" id="CHEBI:49883"/>
        <note>ligand shared with heterodimeric partner</note>
    </ligand>
</feature>
<feature type="binding site" evidence="1">
    <location>
        <position position="108"/>
    </location>
    <ligand>
        <name>[4Fe-4S] cluster</name>
        <dbReference type="ChEBI" id="CHEBI:49883"/>
        <note>ligand shared with heterodimeric partner</note>
    </ligand>
</feature>
<evidence type="ECO:0000255" key="1">
    <source>
        <dbReference type="HAMAP-Rule" id="MF_00352"/>
    </source>
</evidence>
<name>CHLN_ZYGCR</name>
<sequence>MSSKQVPDTLTFECETGNYHTFCPISCVAWLYQKIEDSFFLVVGTKTCGYFLQNALGVMIFAEPRYAMAELEEGDISAQLNDYEELKRLCVQIKKDRNPSVIVWIGTCTTEIIKMDLEGMAPRLEAEIDIPIVVARANGLDYAFTQGEDTVLAAMANRCPEWIQNAQNNNDQDQAIQGLMSFFPLKNTKLSSEPTLLSNHPPLVLFGSLPSNVASQITLELKRQNIHVSGWLPAQRYSELPSVGEGVYVCGVNPFLSRTATTLMRRRKCKLIGAPFPIGPDGTRAWIEKICSVFGIEPQGLEEREAQVWKGLQDYLDLVRGKSVFFMGDNLLEVSLARFLIRCGMIVYEIGIPYMDKRYQAAELALLQQTCEQMGTPMPRIVEKPDNYNQVQRMRELQPDLAITGMAHANPLEARGISTKWSVEFTFAQIHGFTNARDILELVTRPLRRNLSLEDLGWSALVKRDKINLV</sequence>
<reference key="1">
    <citation type="journal article" date="2005" name="BMC Biol.">
        <title>The complete chloroplast DNA sequences of the charophycean green algae Staurastrum and Zygnema reveal that the chloroplast genome underwent extensive changes during the evolution of the Zygnematales.</title>
        <authorList>
            <person name="Turmel M."/>
            <person name="Otis C."/>
            <person name="Lemieux C."/>
        </authorList>
    </citation>
    <scope>NUCLEOTIDE SEQUENCE [LARGE SCALE GENOMIC DNA]</scope>
</reference>
<protein>
    <recommendedName>
        <fullName evidence="1">Light-independent protochlorophyllide reductase subunit N</fullName>
        <shortName evidence="1">DPOR subunit N</shortName>
        <shortName evidence="1">LI-POR subunit N</shortName>
        <ecNumber evidence="1">1.3.7.7</ecNumber>
    </recommendedName>
</protein>
<gene>
    <name evidence="1" type="primary">chlN</name>
</gene>
<dbReference type="EC" id="1.3.7.7" evidence="1"/>
<dbReference type="EMBL" id="AY958086">
    <property type="protein sequence ID" value="AAX45806.1"/>
    <property type="molecule type" value="Genomic_DNA"/>
</dbReference>
<dbReference type="RefSeq" id="YP_636520.1">
    <property type="nucleotide sequence ID" value="NC_008117.1"/>
</dbReference>
<dbReference type="SMR" id="Q32RK6"/>
<dbReference type="GeneID" id="4108126"/>
<dbReference type="UniPathway" id="UPA00670"/>
<dbReference type="GO" id="GO:0009507">
    <property type="term" value="C:chloroplast"/>
    <property type="evidence" value="ECO:0007669"/>
    <property type="project" value="UniProtKB-SubCell"/>
</dbReference>
<dbReference type="GO" id="GO:0051539">
    <property type="term" value="F:4 iron, 4 sulfur cluster binding"/>
    <property type="evidence" value="ECO:0007669"/>
    <property type="project" value="UniProtKB-UniRule"/>
</dbReference>
<dbReference type="GO" id="GO:0005524">
    <property type="term" value="F:ATP binding"/>
    <property type="evidence" value="ECO:0007669"/>
    <property type="project" value="UniProtKB-UniRule"/>
</dbReference>
<dbReference type="GO" id="GO:0046872">
    <property type="term" value="F:metal ion binding"/>
    <property type="evidence" value="ECO:0007669"/>
    <property type="project" value="UniProtKB-KW"/>
</dbReference>
<dbReference type="GO" id="GO:0016730">
    <property type="term" value="F:oxidoreductase activity, acting on iron-sulfur proteins as donors"/>
    <property type="evidence" value="ECO:0007669"/>
    <property type="project" value="InterPro"/>
</dbReference>
<dbReference type="GO" id="GO:0016636">
    <property type="term" value="F:oxidoreductase activity, acting on the CH-CH group of donors, iron-sulfur protein as acceptor"/>
    <property type="evidence" value="ECO:0007669"/>
    <property type="project" value="UniProtKB-UniRule"/>
</dbReference>
<dbReference type="GO" id="GO:0036068">
    <property type="term" value="P:light-independent chlorophyll biosynthetic process"/>
    <property type="evidence" value="ECO:0007669"/>
    <property type="project" value="UniProtKB-UniRule"/>
</dbReference>
<dbReference type="GO" id="GO:0019685">
    <property type="term" value="P:photosynthesis, dark reaction"/>
    <property type="evidence" value="ECO:0007669"/>
    <property type="project" value="InterPro"/>
</dbReference>
<dbReference type="CDD" id="cd01979">
    <property type="entry name" value="Pchlide_reductase_N"/>
    <property type="match status" value="1"/>
</dbReference>
<dbReference type="Gene3D" id="3.40.50.1980">
    <property type="entry name" value="Nitrogenase molybdenum iron protein domain"/>
    <property type="match status" value="3"/>
</dbReference>
<dbReference type="HAMAP" id="MF_00352">
    <property type="entry name" value="ChlN_BchN"/>
    <property type="match status" value="1"/>
</dbReference>
<dbReference type="InterPro" id="IPR050293">
    <property type="entry name" value="LIPOR_BchN/ChlN"/>
</dbReference>
<dbReference type="InterPro" id="IPR000510">
    <property type="entry name" value="Nase/OxRdtase_comp1"/>
</dbReference>
<dbReference type="InterPro" id="IPR005970">
    <property type="entry name" value="Protochl_reductN"/>
</dbReference>
<dbReference type="NCBIfam" id="TIGR01279">
    <property type="entry name" value="DPOR_bchN"/>
    <property type="match status" value="1"/>
</dbReference>
<dbReference type="NCBIfam" id="NF002768">
    <property type="entry name" value="PRK02842.1"/>
    <property type="match status" value="1"/>
</dbReference>
<dbReference type="PANTHER" id="PTHR39429">
    <property type="entry name" value="LIGHT-INDEPENDENT PROTOCHLOROPHYLLIDE REDUCTASE SUBUNIT N"/>
    <property type="match status" value="1"/>
</dbReference>
<dbReference type="PANTHER" id="PTHR39429:SF3">
    <property type="entry name" value="LIGHT-INDEPENDENT PROTOCHLOROPHYLLIDE REDUCTASE SUBUNIT N"/>
    <property type="match status" value="1"/>
</dbReference>
<dbReference type="Pfam" id="PF00148">
    <property type="entry name" value="Oxidored_nitro"/>
    <property type="match status" value="1"/>
</dbReference>
<dbReference type="PIRSF" id="PIRSF000162">
    <property type="entry name" value="P_chlorophyll_rd"/>
    <property type="match status" value="1"/>
</dbReference>
<dbReference type="SUPFAM" id="SSF53807">
    <property type="entry name" value="Helical backbone' metal receptor"/>
    <property type="match status" value="1"/>
</dbReference>
<accession>Q32RK6</accession>
<comment type="function">
    <text evidence="1">Component of the dark-operative protochlorophyllide reductase (DPOR) that uses Mg-ATP and reduced ferredoxin to reduce ring D of protochlorophyllide (Pchlide) to form chlorophyllide a (Chlide). This reaction is light-independent. The NB-protein (ChlN-ChlB) is the catalytic component of the complex.</text>
</comment>
<comment type="catalytic activity">
    <reaction evidence="1">
        <text>chlorophyllide a + oxidized 2[4Fe-4S]-[ferredoxin] + 2 ADP + 2 phosphate = protochlorophyllide a + reduced 2[4Fe-4S]-[ferredoxin] + 2 ATP + 2 H2O</text>
        <dbReference type="Rhea" id="RHEA:28202"/>
        <dbReference type="Rhea" id="RHEA-COMP:10002"/>
        <dbReference type="Rhea" id="RHEA-COMP:10004"/>
        <dbReference type="ChEBI" id="CHEBI:15377"/>
        <dbReference type="ChEBI" id="CHEBI:30616"/>
        <dbReference type="ChEBI" id="CHEBI:33722"/>
        <dbReference type="ChEBI" id="CHEBI:33723"/>
        <dbReference type="ChEBI" id="CHEBI:43474"/>
        <dbReference type="ChEBI" id="CHEBI:83348"/>
        <dbReference type="ChEBI" id="CHEBI:83350"/>
        <dbReference type="ChEBI" id="CHEBI:456216"/>
        <dbReference type="EC" id="1.3.7.7"/>
    </reaction>
</comment>
<comment type="cofactor">
    <cofactor evidence="1">
        <name>[4Fe-4S] cluster</name>
        <dbReference type="ChEBI" id="CHEBI:49883"/>
    </cofactor>
    <text evidence="1">Binds 1 [4Fe-4S] cluster per heterodimer. The cluster is bound at the heterodimer interface by residues from both subunits.</text>
</comment>
<comment type="pathway">
    <text evidence="1">Porphyrin-containing compound metabolism; chlorophyll biosynthesis (light-independent).</text>
</comment>
<comment type="subunit">
    <text evidence="1">Protochlorophyllide reductase is composed of three subunits; ChlL, ChlN and ChlB. Forms a heterotetramer of two ChlB and two ChlN subunits.</text>
</comment>
<comment type="subcellular location">
    <subcellularLocation>
        <location>Plastid</location>
        <location>Chloroplast</location>
    </subcellularLocation>
</comment>
<comment type="similarity">
    <text evidence="1">Belongs to the BchN/ChlN family.</text>
</comment>
<proteinExistence type="inferred from homology"/>